<organism>
    <name type="scientific">Pan troglodytes</name>
    <name type="common">Chimpanzee</name>
    <dbReference type="NCBI Taxonomy" id="9598"/>
    <lineage>
        <taxon>Eukaryota</taxon>
        <taxon>Metazoa</taxon>
        <taxon>Chordata</taxon>
        <taxon>Craniata</taxon>
        <taxon>Vertebrata</taxon>
        <taxon>Euteleostomi</taxon>
        <taxon>Mammalia</taxon>
        <taxon>Eutheria</taxon>
        <taxon>Euarchontoglires</taxon>
        <taxon>Primates</taxon>
        <taxon>Haplorrhini</taxon>
        <taxon>Catarrhini</taxon>
        <taxon>Hominidae</taxon>
        <taxon>Pan</taxon>
    </lineage>
</organism>
<feature type="chain" id="PRO_0000056674" description="Rab GDP dissociation inhibitor alpha">
    <location>
        <begin position="1"/>
        <end position="447"/>
    </location>
</feature>
<name>GDIA_PANTR</name>
<accession>P60028</accession>
<accession>A5A6L3</accession>
<proteinExistence type="evidence at transcript level"/>
<sequence>MDEEYDVIVLGTGLTECILSGIMSVNGKKVLHMDRNPYYGGESSSITPLEELYKRFQLLEGPPESMGRGRDWNVDLIPKFLMANGQLVKMLLYTEVTRYLDFKVVEGSFVYKGGKIYKVPSTETEALASNLMGMFEKRRFRKFLVFVANFDENDPKTFEGVDPQTTSMRDVYRKFDLGQDVIDFTGHALALYRTDDYLDQPCLETVNRIKLYSESLARYGKSPYLYPLYGLGELPQGFARLSAIYGGTYMLNKPVDDIIMENGKVVGVKSEGEVARCKQLICDPSYIPDRVRKAGQVIRIICILSHPIKNTNDANSCQIIIPQNQVNRKSDIYVCMISYAHNVAAQGKYIAIASTTVETTDPEKEVEPALELLEPIDQKFVAISDLYEPIDDGCESQVFCSCSYDATTHFETTCNDIKDIYKRMAGTAFDFENMKRKQNDVFGEAEQ</sequence>
<protein>
    <recommendedName>
        <fullName>Rab GDP dissociation inhibitor alpha</fullName>
        <shortName>Rab GDI alpha</shortName>
    </recommendedName>
    <alternativeName>
        <fullName>Guanosine diphosphate dissociation inhibitor 1</fullName>
        <shortName>GDI-1</shortName>
    </alternativeName>
</protein>
<gene>
    <name type="primary">GDI1</name>
    <name type="synonym">RABGDIA</name>
</gene>
<comment type="function">
    <text evidence="1">Regulates the GDP/GTP exchange reaction of most Rab proteins by inhibiting the dissociation of GDP from them, and the subsequent binding of GTP to them. Promotes the dissociation of GDP-bound Rab proteins from the membrane and inhibits their activation. Promotes the dissociation of RAB1A, RAB3A, RAB5A and RAB10 from membranes (By similarity).</text>
</comment>
<comment type="subunit">
    <text evidence="2">Interacts with RHOH (By similarity). Interacts with the non-phosphorylated forms of RAB1A, RAB3A, RAB5A, RAB5B, RAB5C, RAB8A, RAB8B, RAB10, RAB12, RAB35, and RAB43 (By similarity).</text>
</comment>
<comment type="subcellular location">
    <subcellularLocation>
        <location evidence="1">Cytoplasm</location>
    </subcellularLocation>
    <subcellularLocation>
        <location evidence="1">Golgi apparatus</location>
        <location evidence="1">trans-Golgi network</location>
    </subcellularLocation>
</comment>
<comment type="similarity">
    <text evidence="3">Belongs to the Rab GDI family.</text>
</comment>
<dbReference type="EMBL" id="AB102648">
    <property type="protein sequence ID" value="BAC81117.1"/>
    <property type="molecule type" value="mRNA"/>
</dbReference>
<dbReference type="EMBL" id="AY665281">
    <property type="protein sequence ID" value="AAV74319.1"/>
    <property type="molecule type" value="mRNA"/>
</dbReference>
<dbReference type="EMBL" id="AB222141">
    <property type="protein sequence ID" value="BAF62386.1"/>
    <property type="molecule type" value="mRNA"/>
</dbReference>
<dbReference type="RefSeq" id="NP_001009061.1">
    <property type="nucleotide sequence ID" value="NM_001009061.1"/>
</dbReference>
<dbReference type="SMR" id="P60028"/>
<dbReference type="FunCoup" id="P60028">
    <property type="interactions" value="1603"/>
</dbReference>
<dbReference type="STRING" id="9598.ENSPTRP00000047203"/>
<dbReference type="PaxDb" id="9598-ENSPTRP00000047203"/>
<dbReference type="GeneID" id="450155"/>
<dbReference type="KEGG" id="ptr:450155"/>
<dbReference type="CTD" id="2664"/>
<dbReference type="eggNOG" id="KOG1439">
    <property type="taxonomic scope" value="Eukaryota"/>
</dbReference>
<dbReference type="HOGENOM" id="CLU_021695_0_0_1"/>
<dbReference type="InParanoid" id="P60028"/>
<dbReference type="OrthoDB" id="5546at9604"/>
<dbReference type="TreeFam" id="TF300449"/>
<dbReference type="Proteomes" id="UP000002277">
    <property type="component" value="Unplaced"/>
</dbReference>
<dbReference type="GO" id="GO:0005829">
    <property type="term" value="C:cytosol"/>
    <property type="evidence" value="ECO:0000318"/>
    <property type="project" value="GO_Central"/>
</dbReference>
<dbReference type="GO" id="GO:0005794">
    <property type="term" value="C:Golgi apparatus"/>
    <property type="evidence" value="ECO:0007669"/>
    <property type="project" value="UniProtKB-SubCell"/>
</dbReference>
<dbReference type="GO" id="GO:0005096">
    <property type="term" value="F:GTPase activator activity"/>
    <property type="evidence" value="ECO:0007669"/>
    <property type="project" value="UniProtKB-KW"/>
</dbReference>
<dbReference type="GO" id="GO:0005093">
    <property type="term" value="F:Rab GDP-dissociation inhibitor activity"/>
    <property type="evidence" value="ECO:0000250"/>
    <property type="project" value="UniProtKB"/>
</dbReference>
<dbReference type="GO" id="GO:0050771">
    <property type="term" value="P:negative regulation of axonogenesis"/>
    <property type="evidence" value="ECO:0000250"/>
    <property type="project" value="UniProtKB"/>
</dbReference>
<dbReference type="GO" id="GO:0090315">
    <property type="term" value="P:negative regulation of protein targeting to membrane"/>
    <property type="evidence" value="ECO:0000250"/>
    <property type="project" value="UniProtKB"/>
</dbReference>
<dbReference type="GO" id="GO:0015031">
    <property type="term" value="P:protein transport"/>
    <property type="evidence" value="ECO:0007669"/>
    <property type="project" value="InterPro"/>
</dbReference>
<dbReference type="GO" id="GO:0032482">
    <property type="term" value="P:Rab protein signal transduction"/>
    <property type="evidence" value="ECO:0000250"/>
    <property type="project" value="UniProtKB"/>
</dbReference>
<dbReference type="GO" id="GO:0016192">
    <property type="term" value="P:vesicle-mediated transport"/>
    <property type="evidence" value="ECO:0000318"/>
    <property type="project" value="GO_Central"/>
</dbReference>
<dbReference type="FunFam" id="1.10.405.10:FF:000001">
    <property type="entry name" value="Rab GDP dissociation inhibitor"/>
    <property type="match status" value="1"/>
</dbReference>
<dbReference type="FunFam" id="3.30.519.10:FF:000005">
    <property type="entry name" value="Rab GDP dissociation inhibitor"/>
    <property type="match status" value="1"/>
</dbReference>
<dbReference type="FunFam" id="3.30.519.10:FF:000014">
    <property type="entry name" value="Rab GDP dissociation inhibitor"/>
    <property type="match status" value="1"/>
</dbReference>
<dbReference type="FunFam" id="3.50.50.60:FF:000158">
    <property type="entry name" value="Rab GDP dissociation inhibitor"/>
    <property type="match status" value="1"/>
</dbReference>
<dbReference type="FunFam" id="3.50.50.60:FF:000232">
    <property type="entry name" value="Rab GDP dissociation inhibitor"/>
    <property type="match status" value="1"/>
</dbReference>
<dbReference type="Gene3D" id="3.50.50.60">
    <property type="entry name" value="FAD/NAD(P)-binding domain"/>
    <property type="match status" value="1"/>
</dbReference>
<dbReference type="Gene3D" id="1.10.405.10">
    <property type="entry name" value="Guanine Nucleotide Dissociation Inhibitor, domain 1"/>
    <property type="match status" value="1"/>
</dbReference>
<dbReference type="Gene3D" id="3.30.519.10">
    <property type="entry name" value="Guanine Nucleotide Dissociation Inhibitor, domain 2"/>
    <property type="match status" value="1"/>
</dbReference>
<dbReference type="InterPro" id="IPR036188">
    <property type="entry name" value="FAD/NAD-bd_sf"/>
</dbReference>
<dbReference type="InterPro" id="IPR018203">
    <property type="entry name" value="GDP_dissociation_inhibitor"/>
</dbReference>
<dbReference type="InterPro" id="IPR000806">
    <property type="entry name" value="RabGDI"/>
</dbReference>
<dbReference type="PANTHER" id="PTHR11787:SF3">
    <property type="entry name" value="RAB GDP DISSOCIATION INHIBITOR ALPHA"/>
    <property type="match status" value="1"/>
</dbReference>
<dbReference type="PANTHER" id="PTHR11787">
    <property type="entry name" value="RAB GDP-DISSOCIATION INHIBITOR"/>
    <property type="match status" value="1"/>
</dbReference>
<dbReference type="Pfam" id="PF00996">
    <property type="entry name" value="GDI"/>
    <property type="match status" value="1"/>
</dbReference>
<dbReference type="PRINTS" id="PR00892">
    <property type="entry name" value="RABGDI"/>
</dbReference>
<dbReference type="PRINTS" id="PR00891">
    <property type="entry name" value="RABGDIREP"/>
</dbReference>
<dbReference type="SUPFAM" id="SSF51905">
    <property type="entry name" value="FAD/NAD(P)-binding domain"/>
    <property type="match status" value="2"/>
</dbReference>
<evidence type="ECO:0000250" key="1"/>
<evidence type="ECO:0000250" key="2">
    <source>
        <dbReference type="UniProtKB" id="P31150"/>
    </source>
</evidence>
<evidence type="ECO:0000305" key="3"/>
<keyword id="KW-0963">Cytoplasm</keyword>
<keyword id="KW-0333">Golgi apparatus</keyword>
<keyword id="KW-0343">GTPase activation</keyword>
<keyword id="KW-1185">Reference proteome</keyword>
<reference key="1">
    <citation type="journal article" date="2003" name="Mol. Biol. Evol.">
        <title>Gene diversity patterns at 10 X-chromosomal loci in humans and chimpanzees.</title>
        <authorList>
            <person name="Kitano T."/>
            <person name="Schwarz C."/>
            <person name="Nickel B."/>
            <person name="Paeaebo S."/>
        </authorList>
    </citation>
    <scope>NUCLEOTIDE SEQUENCE [MRNA]</scope>
</reference>
<reference key="2">
    <citation type="journal article" date="2004" name="Cell">
        <title>Accelerated evolution of nervous system genes in the origin of Homo sapiens.</title>
        <authorList>
            <person name="Dorus S."/>
            <person name="Vallender E.J."/>
            <person name="Evans P.D."/>
            <person name="Anderson J.R."/>
            <person name="Gilbert S.L."/>
            <person name="Mahowald M."/>
            <person name="Wyckoff G.J."/>
            <person name="Malcom C.M."/>
            <person name="Lahn B.T."/>
        </authorList>
    </citation>
    <scope>NUCLEOTIDE SEQUENCE [MRNA]</scope>
</reference>
<reference key="3">
    <citation type="journal article" date="2007" name="Gene">
        <title>Mapping of chimpanzee full-length cDNAs onto the human genome unveils large potential divergence of the transcriptome.</title>
        <authorList>
            <person name="Sakate R."/>
            <person name="Suto Y."/>
            <person name="Imanishi T."/>
            <person name="Tanoue T."/>
            <person name="Hida M."/>
            <person name="Hayasaka I."/>
            <person name="Kusuda J."/>
            <person name="Gojobori T."/>
            <person name="Hashimoto K."/>
            <person name="Hirai M."/>
        </authorList>
    </citation>
    <scope>NUCLEOTIDE SEQUENCE [MRNA]</scope>
    <source>
        <tissue>Brain</tissue>
    </source>
</reference>